<gene>
    <name type="primary">MELT</name>
</gene>
<protein>
    <recommendedName>
        <fullName evidence="3">Melittin</fullName>
        <shortName>MEL</shortName>
        <shortName>MLT</shortName>
    </recommendedName>
</protein>
<dbReference type="EMBL" id="AF487908">
    <property type="protein sequence ID" value="AAO12202.1"/>
    <property type="molecule type" value="mRNA"/>
</dbReference>
<dbReference type="BMRB" id="P68409"/>
<dbReference type="SMR" id="P68409"/>
<dbReference type="GO" id="GO:0005576">
    <property type="term" value="C:extracellular region"/>
    <property type="evidence" value="ECO:0007669"/>
    <property type="project" value="UniProtKB-SubCell"/>
</dbReference>
<dbReference type="GO" id="GO:0044218">
    <property type="term" value="C:other organism cell membrane"/>
    <property type="evidence" value="ECO:0007669"/>
    <property type="project" value="UniProtKB-KW"/>
</dbReference>
<dbReference type="GO" id="GO:0046930">
    <property type="term" value="C:pore complex"/>
    <property type="evidence" value="ECO:0007669"/>
    <property type="project" value="UniProtKB-KW"/>
</dbReference>
<dbReference type="GO" id="GO:0015288">
    <property type="term" value="F:porin activity"/>
    <property type="evidence" value="ECO:0007669"/>
    <property type="project" value="UniProtKB-KW"/>
</dbReference>
<dbReference type="GO" id="GO:0004860">
    <property type="term" value="F:protein kinase inhibitor activity"/>
    <property type="evidence" value="ECO:0007669"/>
    <property type="project" value="InterPro"/>
</dbReference>
<dbReference type="GO" id="GO:0090729">
    <property type="term" value="F:toxin activity"/>
    <property type="evidence" value="ECO:0007669"/>
    <property type="project" value="UniProtKB-KW"/>
</dbReference>
<dbReference type="GO" id="GO:0031640">
    <property type="term" value="P:killing of cells of another organism"/>
    <property type="evidence" value="ECO:0007669"/>
    <property type="project" value="UniProtKB-KW"/>
</dbReference>
<dbReference type="GO" id="GO:0006811">
    <property type="term" value="P:monoatomic ion transport"/>
    <property type="evidence" value="ECO:0007669"/>
    <property type="project" value="UniProtKB-KW"/>
</dbReference>
<dbReference type="InterPro" id="IPR002116">
    <property type="entry name" value="Melittin/Api_allergen"/>
</dbReference>
<dbReference type="Pfam" id="PF01372">
    <property type="entry name" value="Melittin"/>
    <property type="match status" value="1"/>
</dbReference>
<organism>
    <name type="scientific">Vespa velutina nigrithorax</name>
    <name type="common">Hornet</name>
    <dbReference type="NCBI Taxonomy" id="202809"/>
    <lineage>
        <taxon>Eukaryota</taxon>
        <taxon>Metazoa</taxon>
        <taxon>Ecdysozoa</taxon>
        <taxon>Arthropoda</taxon>
        <taxon>Hexapoda</taxon>
        <taxon>Insecta</taxon>
        <taxon>Pterygota</taxon>
        <taxon>Neoptera</taxon>
        <taxon>Endopterygota</taxon>
        <taxon>Hymenoptera</taxon>
        <taxon>Apocrita</taxon>
        <taxon>Aculeata</taxon>
        <taxon>Vespoidea</taxon>
        <taxon>Vespidae</taxon>
        <taxon>Vespinae</taxon>
        <taxon>Vespa</taxon>
    </lineage>
</organism>
<accession>P68409</accession>
<accession>P59260</accession>
<evidence type="ECO:0000250" key="1"/>
<evidence type="ECO:0000250" key="2">
    <source>
        <dbReference type="UniProtKB" id="P01501"/>
    </source>
</evidence>
<evidence type="ECO:0000303" key="3">
    <source>
    </source>
</evidence>
<evidence type="ECO:0000305" key="4"/>
<evidence type="ECO:0000305" key="5">
    <source>
    </source>
</evidence>
<comment type="function">
    <text evidence="2">Main toxin of bee venom with strong hemolytic activity and antimicrobial activity. It has enhancing effects on bee venom phospholipase A2 activity. This amphipathic toxin binds to negatively charged membrane surface and forms pore by inserting into lipid bilayers inducing the leakage of ions and molecules and the enhancement of permeability that ultimately leads to cell lysis. It acts as a voltage-gated pore with higher selectivity for anions over cations. The ion conductance has been shown to be voltage-dependent. Self-association of melittin in membranes is promoted by high ionic strength, but not by the presence of negatively charged lipids. In vivo, intradermal injection into healthy human volunteers produce sharp pain sensation and an inflammatory response. It produces pain by activating primary nociceptor cells directly and indirectly due to its ability to activate plasma membrane phospholipase A2 and its pore-forming activity.</text>
</comment>
<comment type="subunit">
    <text evidence="2">Monomer (in solution and for integration into membranes), homotetramer (in solution and potentially as a toroidal pore in membranes), and potenially homomultimer (as a toroidal pore in membranes).</text>
</comment>
<comment type="subcellular location">
    <subcellularLocation>
        <location evidence="5">Secreted</location>
    </subcellularLocation>
    <subcellularLocation>
        <location evidence="2">Target cell membrane</location>
    </subcellularLocation>
    <text evidence="2">Alpha-helical peptides form toroidal pores in the prey.</text>
</comment>
<comment type="tissue specificity">
    <text evidence="5">Expressed by the venom gland.</text>
</comment>
<comment type="allergen">
    <text evidence="2">Causes an allergic reaction in human.</text>
</comment>
<comment type="similarity">
    <text evidence="4">Belongs to the melittin family.</text>
</comment>
<sequence length="70" mass="7543">MKFLVNVALVFMVVYISFIYAAPEPEPAPEAEAEADAEADPEAGIGAVLKVLTTGLPALISWIKRKRQQG</sequence>
<name>MEL_VESVN</name>
<reference key="1">
    <citation type="journal article" date="2003" name="Yi Chuan Xue Bao">
        <title>Cloning and comparative analysis of the venom prepromelittin genes from four wasp species.</title>
        <authorList>
            <person name="Shi W.J."/>
            <person name="Zhang S.F."/>
            <person name="Zhang C.-X."/>
            <person name="Cheng J.A."/>
        </authorList>
    </citation>
    <scope>NUCLEOTIDE SEQUENCE [MRNA]</scope>
    <source>
        <tissue>Venom gland</tissue>
    </source>
</reference>
<proteinExistence type="inferred from homology"/>
<feature type="signal peptide" evidence="1">
    <location>
        <begin position="1"/>
        <end position="21"/>
    </location>
</feature>
<feature type="propeptide" id="PRO_0000035156" description="Removed by a dipeptidylpeptidase" evidence="1">
    <location>
        <begin position="22"/>
        <end position="43"/>
    </location>
</feature>
<feature type="peptide" id="PRO_0000035157" description="Melittin" evidence="2">
    <location>
        <begin position="44"/>
        <end position="69"/>
    </location>
</feature>
<feature type="site" description="Important for the flexibility at the center of the helix, flexibility that is important for the stability of the voltage-gated pore" evidence="2">
    <location>
        <position position="57"/>
    </location>
</feature>
<feature type="modified residue" description="N-formylglycine; partial" evidence="2">
    <location>
        <position position="44"/>
    </location>
</feature>
<feature type="modified residue" description="Glutamine amide" evidence="2">
    <location>
        <position position="69"/>
    </location>
</feature>
<keyword id="KW-0020">Allergen</keyword>
<keyword id="KW-0027">Amidation</keyword>
<keyword id="KW-0929">Antimicrobial</keyword>
<keyword id="KW-0204">Cytolysis</keyword>
<keyword id="KW-0291">Formylation</keyword>
<keyword id="KW-0354">Hemolysis</keyword>
<keyword id="KW-0406">Ion transport</keyword>
<keyword id="KW-0472">Membrane</keyword>
<keyword id="KW-0626">Porin</keyword>
<keyword id="KW-0964">Secreted</keyword>
<keyword id="KW-0732">Signal</keyword>
<keyword id="KW-1052">Target cell membrane</keyword>
<keyword id="KW-1053">Target membrane</keyword>
<keyword id="KW-0800">Toxin</keyword>
<keyword id="KW-0812">Transmembrane</keyword>
<keyword id="KW-0813">Transport</keyword>